<accession>Q8RWR2</accession>
<accession>Q9FKX2</accession>
<comment type="function">
    <text evidence="4">Promotes leaf senescence.</text>
</comment>
<comment type="subcellular location">
    <subcellularLocation>
        <location evidence="1">Cytoplasm</location>
    </subcellularLocation>
</comment>
<comment type="similarity">
    <text evidence="5">Belongs to the LARP family.</text>
</comment>
<comment type="sequence caution" evidence="5">
    <conflict type="erroneous initiation">
        <sequence resource="EMBL-CDS" id="AAM10313"/>
    </conflict>
    <text>Extended N-terminus.</text>
</comment>
<comment type="sequence caution" evidence="5">
    <conflict type="erroneous initiation">
        <sequence resource="EMBL-CDS" id="AAN31109"/>
    </conflict>
    <text>Extended N-terminus.</text>
</comment>
<comment type="sequence caution" evidence="5">
    <conflict type="erroneous initiation">
        <sequence resource="EMBL-CDS" id="AED98159"/>
    </conflict>
    <text>Extended N-terminus.</text>
</comment>
<comment type="sequence caution" evidence="5">
    <conflict type="erroneous gene model prediction">
        <sequence resource="EMBL-CDS" id="BAB10415"/>
    </conflict>
</comment>
<dbReference type="EMBL" id="AB011474">
    <property type="protein sequence ID" value="BAB10415.1"/>
    <property type="status" value="ALT_SEQ"/>
    <property type="molecule type" value="Genomic_DNA"/>
</dbReference>
<dbReference type="EMBL" id="CP002688">
    <property type="protein sequence ID" value="AED98159.1"/>
    <property type="status" value="ALT_INIT"/>
    <property type="molecule type" value="Genomic_DNA"/>
</dbReference>
<dbReference type="EMBL" id="AY091765">
    <property type="protein sequence ID" value="AAM10313.1"/>
    <property type="status" value="ALT_INIT"/>
    <property type="molecule type" value="mRNA"/>
</dbReference>
<dbReference type="EMBL" id="AY149955">
    <property type="protein sequence ID" value="AAN31109.1"/>
    <property type="status" value="ALT_INIT"/>
    <property type="molecule type" value="mRNA"/>
</dbReference>
<dbReference type="RefSeq" id="NP_201411.2">
    <property type="nucleotide sequence ID" value="NM_126008.5"/>
</dbReference>
<dbReference type="SMR" id="Q8RWR2"/>
<dbReference type="FunCoup" id="Q8RWR2">
    <property type="interactions" value="35"/>
</dbReference>
<dbReference type="STRING" id="3702.Q8RWR2"/>
<dbReference type="GlyGen" id="Q8RWR2">
    <property type="glycosylation" value="1 site, 1 O-linked glycan (1 site)"/>
</dbReference>
<dbReference type="iPTMnet" id="Q8RWR2"/>
<dbReference type="PaxDb" id="3702-AT5G66100.1"/>
<dbReference type="PeptideAtlas" id="Q8RWR2"/>
<dbReference type="ProteomicsDB" id="238428"/>
<dbReference type="GeneID" id="836742"/>
<dbReference type="KEGG" id="ath:AT5G66100"/>
<dbReference type="Araport" id="AT5G66100"/>
<dbReference type="TAIR" id="AT5G66100">
    <property type="gene designation" value="LARP1B"/>
</dbReference>
<dbReference type="eggNOG" id="KOG2590">
    <property type="taxonomic scope" value="Eukaryota"/>
</dbReference>
<dbReference type="HOGENOM" id="CLU_026607_1_0_1"/>
<dbReference type="InParanoid" id="Q8RWR2"/>
<dbReference type="OMA" id="DQMNDEG"/>
<dbReference type="PRO" id="PR:Q8RWR2"/>
<dbReference type="Proteomes" id="UP000006548">
    <property type="component" value="Chromosome 5"/>
</dbReference>
<dbReference type="ExpressionAtlas" id="Q8RWR2">
    <property type="expression patterns" value="baseline and differential"/>
</dbReference>
<dbReference type="GO" id="GO:0005737">
    <property type="term" value="C:cytoplasm"/>
    <property type="evidence" value="ECO:0000250"/>
    <property type="project" value="UniProtKB"/>
</dbReference>
<dbReference type="GO" id="GO:0005634">
    <property type="term" value="C:nucleus"/>
    <property type="evidence" value="ECO:0000318"/>
    <property type="project" value="GO_Central"/>
</dbReference>
<dbReference type="GO" id="GO:0003729">
    <property type="term" value="F:mRNA binding"/>
    <property type="evidence" value="ECO:0000314"/>
    <property type="project" value="TAIR"/>
</dbReference>
<dbReference type="GO" id="GO:0010150">
    <property type="term" value="P:leaf senescence"/>
    <property type="evidence" value="ECO:0000315"/>
    <property type="project" value="TAIR"/>
</dbReference>
<dbReference type="CDD" id="cd07323">
    <property type="entry name" value="LAM"/>
    <property type="match status" value="1"/>
</dbReference>
<dbReference type="FunFam" id="1.10.10.10:FF:000131">
    <property type="entry name" value="la-related protein 1B isoform X2"/>
    <property type="match status" value="1"/>
</dbReference>
<dbReference type="Gene3D" id="1.10.10.10">
    <property type="entry name" value="Winged helix-like DNA-binding domain superfamily/Winged helix DNA-binding domain"/>
    <property type="match status" value="1"/>
</dbReference>
<dbReference type="InterPro" id="IPR045180">
    <property type="entry name" value="La_dom_prot"/>
</dbReference>
<dbReference type="InterPro" id="IPR006630">
    <property type="entry name" value="La_HTH"/>
</dbReference>
<dbReference type="InterPro" id="IPR036388">
    <property type="entry name" value="WH-like_DNA-bd_sf"/>
</dbReference>
<dbReference type="InterPro" id="IPR036390">
    <property type="entry name" value="WH_DNA-bd_sf"/>
</dbReference>
<dbReference type="PANTHER" id="PTHR22792:SF159">
    <property type="entry name" value="LA-RELATED PROTEIN 1B-RELATED"/>
    <property type="match status" value="1"/>
</dbReference>
<dbReference type="PANTHER" id="PTHR22792">
    <property type="entry name" value="LUPUS LA PROTEIN-RELATED"/>
    <property type="match status" value="1"/>
</dbReference>
<dbReference type="Pfam" id="PF05383">
    <property type="entry name" value="La"/>
    <property type="match status" value="1"/>
</dbReference>
<dbReference type="SMART" id="SM00715">
    <property type="entry name" value="LA"/>
    <property type="match status" value="1"/>
</dbReference>
<dbReference type="SUPFAM" id="SSF46785">
    <property type="entry name" value="Winged helix' DNA-binding domain"/>
    <property type="match status" value="1"/>
</dbReference>
<dbReference type="PROSITE" id="PS50961">
    <property type="entry name" value="HTH_LA"/>
    <property type="match status" value="1"/>
</dbReference>
<feature type="initiator methionine" description="Removed" evidence="6">
    <location>
        <position position="1"/>
    </location>
</feature>
<feature type="chain" id="PRO_0000428667" description="La-related protein 1B">
    <location>
        <begin position="2"/>
        <end position="452"/>
    </location>
</feature>
<feature type="domain" description="HTH La-type RNA-binding" evidence="2">
    <location>
        <begin position="328"/>
        <end position="417"/>
    </location>
</feature>
<feature type="region of interest" description="Disordered" evidence="3">
    <location>
        <begin position="1"/>
        <end position="251"/>
    </location>
</feature>
<feature type="region of interest" description="Disordered" evidence="3">
    <location>
        <begin position="419"/>
        <end position="452"/>
    </location>
</feature>
<feature type="compositionally biased region" description="Low complexity" evidence="3">
    <location>
        <begin position="1"/>
        <end position="22"/>
    </location>
</feature>
<feature type="compositionally biased region" description="Polar residues" evidence="3">
    <location>
        <begin position="44"/>
        <end position="68"/>
    </location>
</feature>
<feature type="compositionally biased region" description="Low complexity" evidence="3">
    <location>
        <begin position="99"/>
        <end position="117"/>
    </location>
</feature>
<feature type="compositionally biased region" description="Low complexity" evidence="3">
    <location>
        <begin position="136"/>
        <end position="163"/>
    </location>
</feature>
<feature type="compositionally biased region" description="Low complexity" evidence="3">
    <location>
        <begin position="171"/>
        <end position="185"/>
    </location>
</feature>
<feature type="compositionally biased region" description="Low complexity" evidence="3">
    <location>
        <begin position="206"/>
        <end position="223"/>
    </location>
</feature>
<feature type="compositionally biased region" description="Basic and acidic residues" evidence="3">
    <location>
        <begin position="225"/>
        <end position="236"/>
    </location>
</feature>
<feature type="compositionally biased region" description="Polar residues" evidence="3">
    <location>
        <begin position="237"/>
        <end position="247"/>
    </location>
</feature>
<feature type="compositionally biased region" description="Low complexity" evidence="3">
    <location>
        <begin position="422"/>
        <end position="434"/>
    </location>
</feature>
<feature type="compositionally biased region" description="Polar residues" evidence="3">
    <location>
        <begin position="435"/>
        <end position="445"/>
    </location>
</feature>
<feature type="modified residue" description="N-acetylalanine" evidence="6">
    <location>
        <position position="2"/>
    </location>
</feature>
<name>LRP1B_ARATH</name>
<evidence type="ECO:0000250" key="1"/>
<evidence type="ECO:0000255" key="2">
    <source>
        <dbReference type="PROSITE-ProRule" id="PRU00332"/>
    </source>
</evidence>
<evidence type="ECO:0000256" key="3">
    <source>
        <dbReference type="SAM" id="MobiDB-lite"/>
    </source>
</evidence>
<evidence type="ECO:0000269" key="4">
    <source>
    </source>
</evidence>
<evidence type="ECO:0000305" key="5"/>
<evidence type="ECO:0007744" key="6">
    <source>
    </source>
</evidence>
<reference key="1">
    <citation type="journal article" date="1998" name="DNA Res.">
        <title>Structural analysis of Arabidopsis thaliana chromosome 5. V. Sequence features of the regions of 1,381,565 bp covered by twenty one physically assigned P1 and TAC clones.</title>
        <authorList>
            <person name="Kaneko T."/>
            <person name="Kotani H."/>
            <person name="Nakamura Y."/>
            <person name="Sato S."/>
            <person name="Asamizu E."/>
            <person name="Miyajima N."/>
            <person name="Tabata S."/>
        </authorList>
    </citation>
    <scope>NUCLEOTIDE SEQUENCE [LARGE SCALE GENOMIC DNA]</scope>
    <source>
        <strain>cv. Columbia</strain>
    </source>
</reference>
<reference key="2">
    <citation type="journal article" date="2017" name="Plant J.">
        <title>Araport11: a complete reannotation of the Arabidopsis thaliana reference genome.</title>
        <authorList>
            <person name="Cheng C.Y."/>
            <person name="Krishnakumar V."/>
            <person name="Chan A.P."/>
            <person name="Thibaud-Nissen F."/>
            <person name="Schobel S."/>
            <person name="Town C.D."/>
        </authorList>
    </citation>
    <scope>GENOME REANNOTATION</scope>
    <source>
        <strain>cv. Columbia</strain>
    </source>
</reference>
<reference key="3">
    <citation type="journal article" date="2003" name="Science">
        <title>Empirical analysis of transcriptional activity in the Arabidopsis genome.</title>
        <authorList>
            <person name="Yamada K."/>
            <person name="Lim J."/>
            <person name="Dale J.M."/>
            <person name="Chen H."/>
            <person name="Shinn P."/>
            <person name="Palm C.J."/>
            <person name="Southwick A.M."/>
            <person name="Wu H.C."/>
            <person name="Kim C.J."/>
            <person name="Nguyen M."/>
            <person name="Pham P.K."/>
            <person name="Cheuk R.F."/>
            <person name="Karlin-Newmann G."/>
            <person name="Liu S.X."/>
            <person name="Lam B."/>
            <person name="Sakano H."/>
            <person name="Wu T."/>
            <person name="Yu G."/>
            <person name="Miranda M."/>
            <person name="Quach H.L."/>
            <person name="Tripp M."/>
            <person name="Chang C.H."/>
            <person name="Lee J.M."/>
            <person name="Toriumi M.J."/>
            <person name="Chan M.M."/>
            <person name="Tang C.C."/>
            <person name="Onodera C.S."/>
            <person name="Deng J.M."/>
            <person name="Akiyama K."/>
            <person name="Ansari Y."/>
            <person name="Arakawa T."/>
            <person name="Banh J."/>
            <person name="Banno F."/>
            <person name="Bowser L."/>
            <person name="Brooks S.Y."/>
            <person name="Carninci P."/>
            <person name="Chao Q."/>
            <person name="Choy N."/>
            <person name="Enju A."/>
            <person name="Goldsmith A.D."/>
            <person name="Gurjal M."/>
            <person name="Hansen N.F."/>
            <person name="Hayashizaki Y."/>
            <person name="Johnson-Hopson C."/>
            <person name="Hsuan V.W."/>
            <person name="Iida K."/>
            <person name="Karnes M."/>
            <person name="Khan S."/>
            <person name="Koesema E."/>
            <person name="Ishida J."/>
            <person name="Jiang P.X."/>
            <person name="Jones T."/>
            <person name="Kawai J."/>
            <person name="Kamiya A."/>
            <person name="Meyers C."/>
            <person name="Nakajima M."/>
            <person name="Narusaka M."/>
            <person name="Seki M."/>
            <person name="Sakurai T."/>
            <person name="Satou M."/>
            <person name="Tamse R."/>
            <person name="Vaysberg M."/>
            <person name="Wallender E.K."/>
            <person name="Wong C."/>
            <person name="Yamamura Y."/>
            <person name="Yuan S."/>
            <person name="Shinozaki K."/>
            <person name="Davis R.W."/>
            <person name="Theologis A."/>
            <person name="Ecker J.R."/>
        </authorList>
    </citation>
    <scope>NUCLEOTIDE SEQUENCE [LARGE SCALE MRNA]</scope>
    <source>
        <strain>cv. Columbia</strain>
    </source>
</reference>
<reference key="4">
    <citation type="journal article" date="2009" name="RNA">
        <title>A comprehensive analysis of the La-motif protein superfamily.</title>
        <authorList>
            <person name="Bousquet-Antonelli C."/>
            <person name="Deragon J.M."/>
        </authorList>
    </citation>
    <scope>GENE FAMILY</scope>
    <scope>NOMENCLATURE</scope>
</reference>
<reference key="5">
    <citation type="journal article" date="2012" name="Mol. Cell. Proteomics">
        <title>Comparative large-scale characterisation of plant vs. mammal proteins reveals similar and idiosyncratic N-alpha acetylation features.</title>
        <authorList>
            <person name="Bienvenut W.V."/>
            <person name="Sumpton D."/>
            <person name="Martinez A."/>
            <person name="Lilla S."/>
            <person name="Espagne C."/>
            <person name="Meinnel T."/>
            <person name="Giglione C."/>
        </authorList>
    </citation>
    <scope>ACETYLATION [LARGE SCALE ANALYSIS] AT ALA-2</scope>
    <scope>CLEAVAGE OF INITIATOR METHIONINE [LARGE SCALE ANALYSIS]</scope>
    <scope>IDENTIFICATION BY MASS SPECTROMETRY [LARGE SCALE ANALYSIS]</scope>
</reference>
<reference key="6">
    <citation type="journal article" date="2012" name="Mol. Cells">
        <title>Overexpression of a LAM domain containing RNA-binding protein LARP1c induces precocious leaf senescence in Arabidopsis.</title>
        <authorList>
            <person name="Zhang B."/>
            <person name="Jia J."/>
            <person name="Yang M."/>
            <person name="Yan C."/>
            <person name="Han Y."/>
        </authorList>
    </citation>
    <scope>FUNCTION</scope>
</reference>
<organism>
    <name type="scientific">Arabidopsis thaliana</name>
    <name type="common">Mouse-ear cress</name>
    <dbReference type="NCBI Taxonomy" id="3702"/>
    <lineage>
        <taxon>Eukaryota</taxon>
        <taxon>Viridiplantae</taxon>
        <taxon>Streptophyta</taxon>
        <taxon>Embryophyta</taxon>
        <taxon>Tracheophyta</taxon>
        <taxon>Spermatophyta</taxon>
        <taxon>Magnoliopsida</taxon>
        <taxon>eudicotyledons</taxon>
        <taxon>Gunneridae</taxon>
        <taxon>Pentapetalae</taxon>
        <taxon>rosids</taxon>
        <taxon>malvids</taxon>
        <taxon>Brassicales</taxon>
        <taxon>Brassicaceae</taxon>
        <taxon>Camelineae</taxon>
        <taxon>Arabidopsis</taxon>
    </lineage>
</organism>
<sequence>MATTASSAANSASRFSIDSSISRSRHGDSSPWLLPSDSHDHPTLSLSQDDPFSAPSVSPPTGNNSSDYDNADKKPPPVWNMPSSNSSSDVGPVMGAAESWPALSLSARSSSIKSPSLDASKPFPDGSSSSIPPPQATSNTSTNANAGSSVSATSSENSAVNNSQRKPFRRNNNTSSSSTSSNVSNAAPLNTRDQNHSQRGGGSFGSGNFRNSQRNRNSSSYPRGEGLHHGNRRNYEHGNQSGFSHRNYSGRDMHLQPQRGVGMIRPQMLMGPPSFPASSAQYMAAPQLGSYGGPIIYPDYAQHVFMPHPSPDPMGLVGPFPLQPMYFRNFDAILYNKILTQVEYYFSADNLSRDEHLRDQMNDEGWVPVRVIAAFRRLAELTNNIQTILEALRSSEVVEIQGETLRRRGDWDKYLLPREPSRSGPAAGASNNASLVSQIESMTLSERSREGV</sequence>
<protein>
    <recommendedName>
        <fullName>La-related protein 1B</fullName>
        <shortName>AtLARP1b</shortName>
    </recommendedName>
</protein>
<proteinExistence type="evidence at protein level"/>
<gene>
    <name type="primary">LARP1B</name>
    <name type="ordered locus">At5g66100</name>
    <name type="ORF">K2A18.18</name>
</gene>
<keyword id="KW-0007">Acetylation</keyword>
<keyword id="KW-0963">Cytoplasm</keyword>
<keyword id="KW-1185">Reference proteome</keyword>
<keyword id="KW-0694">RNA-binding</keyword>